<reference key="1">
    <citation type="journal article" date="1999" name="Genetics">
        <title>Homeologous plastid DNA transformation in tobacco is mediated by multiple recombination events.</title>
        <authorList>
            <person name="Kavanagh T.A."/>
            <person name="Thanh N.D."/>
            <person name="Lao N.T."/>
            <person name="McGrath N."/>
            <person name="Peter S.O."/>
            <person name="Horvath E.M."/>
            <person name="Dix P.J."/>
            <person name="Medgyesy P."/>
        </authorList>
    </citation>
    <scope>NUCLEOTIDE SEQUENCE [GENOMIC DNA]</scope>
    <source>
        <strain>SN</strain>
    </source>
</reference>
<organism>
    <name type="scientific">Solanum nigrum</name>
    <name type="common">Black nightshade</name>
    <dbReference type="NCBI Taxonomy" id="4112"/>
    <lineage>
        <taxon>Eukaryota</taxon>
        <taxon>Viridiplantae</taxon>
        <taxon>Streptophyta</taxon>
        <taxon>Embryophyta</taxon>
        <taxon>Tracheophyta</taxon>
        <taxon>Spermatophyta</taxon>
        <taxon>Magnoliopsida</taxon>
        <taxon>eudicotyledons</taxon>
        <taxon>Gunneridae</taxon>
        <taxon>Pentapetalae</taxon>
        <taxon>asterids</taxon>
        <taxon>lamiids</taxon>
        <taxon>Solanales</taxon>
        <taxon>Solanaceae</taxon>
        <taxon>Solanoideae</taxon>
        <taxon>Solaneae</taxon>
        <taxon>Solanum</taxon>
    </lineage>
</organism>
<name>RR7_SOLNI</name>
<gene>
    <name type="primary">rps7</name>
</gene>
<keyword id="KW-0150">Chloroplast</keyword>
<keyword id="KW-0934">Plastid</keyword>
<keyword id="KW-0687">Ribonucleoprotein</keyword>
<keyword id="KW-0689">Ribosomal protein</keyword>
<keyword id="KW-0694">RNA-binding</keyword>
<keyword id="KW-0699">rRNA-binding</keyword>
<dbReference type="EMBL" id="Y18934">
    <property type="protein sequence ID" value="CAB41472.1"/>
    <property type="molecule type" value="Genomic_DNA"/>
</dbReference>
<dbReference type="RefSeq" id="YP_009171913.1">
    <property type="nucleotide sequence ID" value="NC_028070.2"/>
</dbReference>
<dbReference type="RefSeq" id="YP_009171927.1">
    <property type="nucleotide sequence ID" value="NC_028070.2"/>
</dbReference>
<dbReference type="SMR" id="P62731"/>
<dbReference type="GeneID" id="26047406"/>
<dbReference type="GeneID" id="26047431"/>
<dbReference type="GO" id="GO:0009507">
    <property type="term" value="C:chloroplast"/>
    <property type="evidence" value="ECO:0007669"/>
    <property type="project" value="UniProtKB-SubCell"/>
</dbReference>
<dbReference type="GO" id="GO:0015935">
    <property type="term" value="C:small ribosomal subunit"/>
    <property type="evidence" value="ECO:0007669"/>
    <property type="project" value="InterPro"/>
</dbReference>
<dbReference type="GO" id="GO:0019843">
    <property type="term" value="F:rRNA binding"/>
    <property type="evidence" value="ECO:0007669"/>
    <property type="project" value="UniProtKB-UniRule"/>
</dbReference>
<dbReference type="GO" id="GO:0003735">
    <property type="term" value="F:structural constituent of ribosome"/>
    <property type="evidence" value="ECO:0007669"/>
    <property type="project" value="InterPro"/>
</dbReference>
<dbReference type="GO" id="GO:0006412">
    <property type="term" value="P:translation"/>
    <property type="evidence" value="ECO:0007669"/>
    <property type="project" value="UniProtKB-UniRule"/>
</dbReference>
<dbReference type="CDD" id="cd14871">
    <property type="entry name" value="uS7_Chloroplast"/>
    <property type="match status" value="1"/>
</dbReference>
<dbReference type="FunFam" id="1.10.455.10:FF:000001">
    <property type="entry name" value="30S ribosomal protein S7"/>
    <property type="match status" value="1"/>
</dbReference>
<dbReference type="Gene3D" id="1.10.455.10">
    <property type="entry name" value="Ribosomal protein S7 domain"/>
    <property type="match status" value="1"/>
</dbReference>
<dbReference type="HAMAP" id="MF_00480_B">
    <property type="entry name" value="Ribosomal_uS7_B"/>
    <property type="match status" value="1"/>
</dbReference>
<dbReference type="InterPro" id="IPR000235">
    <property type="entry name" value="Ribosomal_uS7"/>
</dbReference>
<dbReference type="InterPro" id="IPR005717">
    <property type="entry name" value="Ribosomal_uS7_bac/org-type"/>
</dbReference>
<dbReference type="InterPro" id="IPR020606">
    <property type="entry name" value="Ribosomal_uS7_CS"/>
</dbReference>
<dbReference type="InterPro" id="IPR023798">
    <property type="entry name" value="Ribosomal_uS7_dom"/>
</dbReference>
<dbReference type="InterPro" id="IPR036823">
    <property type="entry name" value="Ribosomal_uS7_dom_sf"/>
</dbReference>
<dbReference type="NCBIfam" id="TIGR01029">
    <property type="entry name" value="rpsG_bact"/>
    <property type="match status" value="1"/>
</dbReference>
<dbReference type="PANTHER" id="PTHR11205">
    <property type="entry name" value="RIBOSOMAL PROTEIN S7"/>
    <property type="match status" value="1"/>
</dbReference>
<dbReference type="Pfam" id="PF00177">
    <property type="entry name" value="Ribosomal_S7"/>
    <property type="match status" value="1"/>
</dbReference>
<dbReference type="PIRSF" id="PIRSF002122">
    <property type="entry name" value="RPS7p_RPS7a_RPS5e_RPS7o"/>
    <property type="match status" value="1"/>
</dbReference>
<dbReference type="SUPFAM" id="SSF47973">
    <property type="entry name" value="Ribosomal protein S7"/>
    <property type="match status" value="1"/>
</dbReference>
<dbReference type="PROSITE" id="PS00052">
    <property type="entry name" value="RIBOSOMAL_S7"/>
    <property type="match status" value="1"/>
</dbReference>
<evidence type="ECO:0000250" key="1"/>
<evidence type="ECO:0000305" key="2"/>
<protein>
    <recommendedName>
        <fullName evidence="2">Small ribosomal subunit protein uS7c</fullName>
    </recommendedName>
    <alternativeName>
        <fullName>30S ribosomal protein S7, chloroplastic</fullName>
    </alternativeName>
</protein>
<proteinExistence type="inferred from homology"/>
<comment type="function">
    <text evidence="1">One of the primary rRNA binding proteins, it binds directly to 16S rRNA where it nucleates assembly of the head domain of the 30S subunit.</text>
</comment>
<comment type="subunit">
    <text>Part of the 30S ribosomal subunit.</text>
</comment>
<comment type="subcellular location">
    <subcellularLocation>
        <location>Plastid</location>
        <location>Chloroplast</location>
    </subcellularLocation>
</comment>
<comment type="similarity">
    <text evidence="2">Belongs to the universal ribosomal protein uS7 family.</text>
</comment>
<feature type="chain" id="PRO_0000124505" description="Small ribosomal subunit protein uS7c">
    <location>
        <begin position="1"/>
        <end position="155"/>
    </location>
</feature>
<geneLocation type="chloroplast"/>
<sequence>MSRRGTAEKKTAKSDPIYRNRLVNMLVNRILKHGKKSLAYQIIYRAVKKIQQKTETNPLSVLRQAIRGVTPDITVKARRVGGSTHQVPIEIGSTQGKALAIRWLLAASRKRPGRNMAFKLSSELVDAAKGSGDAIRKKEETHRMAEANRAFAHFR</sequence>
<accession>P62731</accession>
<accession>P06361</accession>